<evidence type="ECO:0000255" key="1">
    <source>
        <dbReference type="HAMAP-Rule" id="MF_00315"/>
    </source>
</evidence>
<feature type="chain" id="PRO_1000115786" description="1-deoxy-D-xylulose-5-phosphate synthase">
    <location>
        <begin position="1"/>
        <end position="619"/>
    </location>
</feature>
<feature type="binding site" evidence="1">
    <location>
        <position position="80"/>
    </location>
    <ligand>
        <name>thiamine diphosphate</name>
        <dbReference type="ChEBI" id="CHEBI:58937"/>
    </ligand>
</feature>
<feature type="binding site" evidence="1">
    <location>
        <begin position="121"/>
        <end position="123"/>
    </location>
    <ligand>
        <name>thiamine diphosphate</name>
        <dbReference type="ChEBI" id="CHEBI:58937"/>
    </ligand>
</feature>
<feature type="binding site" evidence="1">
    <location>
        <position position="152"/>
    </location>
    <ligand>
        <name>Mg(2+)</name>
        <dbReference type="ChEBI" id="CHEBI:18420"/>
    </ligand>
</feature>
<feature type="binding site" evidence="1">
    <location>
        <begin position="153"/>
        <end position="154"/>
    </location>
    <ligand>
        <name>thiamine diphosphate</name>
        <dbReference type="ChEBI" id="CHEBI:58937"/>
    </ligand>
</feature>
<feature type="binding site" evidence="1">
    <location>
        <position position="181"/>
    </location>
    <ligand>
        <name>Mg(2+)</name>
        <dbReference type="ChEBI" id="CHEBI:18420"/>
    </ligand>
</feature>
<feature type="binding site" evidence="1">
    <location>
        <position position="181"/>
    </location>
    <ligand>
        <name>thiamine diphosphate</name>
        <dbReference type="ChEBI" id="CHEBI:58937"/>
    </ligand>
</feature>
<feature type="binding site" evidence="1">
    <location>
        <position position="288"/>
    </location>
    <ligand>
        <name>thiamine diphosphate</name>
        <dbReference type="ChEBI" id="CHEBI:58937"/>
    </ligand>
</feature>
<feature type="binding site" evidence="1">
    <location>
        <position position="370"/>
    </location>
    <ligand>
        <name>thiamine diphosphate</name>
        <dbReference type="ChEBI" id="CHEBI:58937"/>
    </ligand>
</feature>
<name>DXS_YERPY</name>
<proteinExistence type="inferred from homology"/>
<dbReference type="EC" id="2.2.1.7" evidence="1"/>
<dbReference type="EMBL" id="CP000950">
    <property type="protein sequence ID" value="ACA69522.1"/>
    <property type="molecule type" value="Genomic_DNA"/>
</dbReference>
<dbReference type="RefSeq" id="WP_012105576.1">
    <property type="nucleotide sequence ID" value="NZ_CP009792.1"/>
</dbReference>
<dbReference type="SMR" id="B1JID8"/>
<dbReference type="KEGG" id="ypy:YPK_3253"/>
<dbReference type="PATRIC" id="fig|502800.11.peg.3982"/>
<dbReference type="UniPathway" id="UPA00064">
    <property type="reaction ID" value="UER00091"/>
</dbReference>
<dbReference type="GO" id="GO:0005829">
    <property type="term" value="C:cytosol"/>
    <property type="evidence" value="ECO:0007669"/>
    <property type="project" value="TreeGrafter"/>
</dbReference>
<dbReference type="GO" id="GO:0008661">
    <property type="term" value="F:1-deoxy-D-xylulose-5-phosphate synthase activity"/>
    <property type="evidence" value="ECO:0007669"/>
    <property type="project" value="UniProtKB-UniRule"/>
</dbReference>
<dbReference type="GO" id="GO:0000287">
    <property type="term" value="F:magnesium ion binding"/>
    <property type="evidence" value="ECO:0007669"/>
    <property type="project" value="UniProtKB-UniRule"/>
</dbReference>
<dbReference type="GO" id="GO:0030976">
    <property type="term" value="F:thiamine pyrophosphate binding"/>
    <property type="evidence" value="ECO:0007669"/>
    <property type="project" value="UniProtKB-UniRule"/>
</dbReference>
<dbReference type="GO" id="GO:0052865">
    <property type="term" value="P:1-deoxy-D-xylulose 5-phosphate biosynthetic process"/>
    <property type="evidence" value="ECO:0007669"/>
    <property type="project" value="UniProtKB-UniPathway"/>
</dbReference>
<dbReference type="GO" id="GO:0019288">
    <property type="term" value="P:isopentenyl diphosphate biosynthetic process, methylerythritol 4-phosphate pathway"/>
    <property type="evidence" value="ECO:0007669"/>
    <property type="project" value="TreeGrafter"/>
</dbReference>
<dbReference type="GO" id="GO:0016114">
    <property type="term" value="P:terpenoid biosynthetic process"/>
    <property type="evidence" value="ECO:0007669"/>
    <property type="project" value="UniProtKB-UniRule"/>
</dbReference>
<dbReference type="GO" id="GO:0009228">
    <property type="term" value="P:thiamine biosynthetic process"/>
    <property type="evidence" value="ECO:0007669"/>
    <property type="project" value="UniProtKB-UniRule"/>
</dbReference>
<dbReference type="CDD" id="cd02007">
    <property type="entry name" value="TPP_DXS"/>
    <property type="match status" value="1"/>
</dbReference>
<dbReference type="CDD" id="cd07033">
    <property type="entry name" value="TPP_PYR_DXS_TK_like"/>
    <property type="match status" value="1"/>
</dbReference>
<dbReference type="FunFam" id="3.40.50.920:FF:000002">
    <property type="entry name" value="1-deoxy-D-xylulose-5-phosphate synthase"/>
    <property type="match status" value="1"/>
</dbReference>
<dbReference type="FunFam" id="3.40.50.970:FF:000005">
    <property type="entry name" value="1-deoxy-D-xylulose-5-phosphate synthase"/>
    <property type="match status" value="1"/>
</dbReference>
<dbReference type="Gene3D" id="3.40.50.920">
    <property type="match status" value="1"/>
</dbReference>
<dbReference type="Gene3D" id="3.40.50.970">
    <property type="match status" value="2"/>
</dbReference>
<dbReference type="HAMAP" id="MF_00315">
    <property type="entry name" value="DXP_synth"/>
    <property type="match status" value="1"/>
</dbReference>
<dbReference type="InterPro" id="IPR005477">
    <property type="entry name" value="Dxylulose-5-P_synthase"/>
</dbReference>
<dbReference type="InterPro" id="IPR029061">
    <property type="entry name" value="THDP-binding"/>
</dbReference>
<dbReference type="InterPro" id="IPR009014">
    <property type="entry name" value="Transketo_C/PFOR_II"/>
</dbReference>
<dbReference type="InterPro" id="IPR005475">
    <property type="entry name" value="Transketolase-like_Pyr-bd"/>
</dbReference>
<dbReference type="InterPro" id="IPR020826">
    <property type="entry name" value="Transketolase_BS"/>
</dbReference>
<dbReference type="InterPro" id="IPR033248">
    <property type="entry name" value="Transketolase_C"/>
</dbReference>
<dbReference type="InterPro" id="IPR049557">
    <property type="entry name" value="Transketolase_CS"/>
</dbReference>
<dbReference type="NCBIfam" id="TIGR00204">
    <property type="entry name" value="dxs"/>
    <property type="match status" value="1"/>
</dbReference>
<dbReference type="NCBIfam" id="NF003933">
    <property type="entry name" value="PRK05444.2-2"/>
    <property type="match status" value="1"/>
</dbReference>
<dbReference type="PANTHER" id="PTHR43322">
    <property type="entry name" value="1-D-DEOXYXYLULOSE 5-PHOSPHATE SYNTHASE-RELATED"/>
    <property type="match status" value="1"/>
</dbReference>
<dbReference type="PANTHER" id="PTHR43322:SF5">
    <property type="entry name" value="1-DEOXY-D-XYLULOSE-5-PHOSPHATE SYNTHASE, CHLOROPLASTIC"/>
    <property type="match status" value="1"/>
</dbReference>
<dbReference type="Pfam" id="PF13292">
    <property type="entry name" value="DXP_synthase_N"/>
    <property type="match status" value="1"/>
</dbReference>
<dbReference type="Pfam" id="PF02779">
    <property type="entry name" value="Transket_pyr"/>
    <property type="match status" value="1"/>
</dbReference>
<dbReference type="Pfam" id="PF02780">
    <property type="entry name" value="Transketolase_C"/>
    <property type="match status" value="1"/>
</dbReference>
<dbReference type="SMART" id="SM00861">
    <property type="entry name" value="Transket_pyr"/>
    <property type="match status" value="1"/>
</dbReference>
<dbReference type="SUPFAM" id="SSF52518">
    <property type="entry name" value="Thiamin diphosphate-binding fold (THDP-binding)"/>
    <property type="match status" value="2"/>
</dbReference>
<dbReference type="SUPFAM" id="SSF52922">
    <property type="entry name" value="TK C-terminal domain-like"/>
    <property type="match status" value="1"/>
</dbReference>
<dbReference type="PROSITE" id="PS00801">
    <property type="entry name" value="TRANSKETOLASE_1"/>
    <property type="match status" value="1"/>
</dbReference>
<dbReference type="PROSITE" id="PS00802">
    <property type="entry name" value="TRANSKETOLASE_2"/>
    <property type="match status" value="1"/>
</dbReference>
<reference key="1">
    <citation type="submission" date="2008-02" db="EMBL/GenBank/DDBJ databases">
        <title>Complete sequence of Yersinia pseudotuberculosis YPIII.</title>
        <authorList>
            <consortium name="US DOE Joint Genome Institute"/>
            <person name="Copeland A."/>
            <person name="Lucas S."/>
            <person name="Lapidus A."/>
            <person name="Glavina del Rio T."/>
            <person name="Dalin E."/>
            <person name="Tice H."/>
            <person name="Bruce D."/>
            <person name="Goodwin L."/>
            <person name="Pitluck S."/>
            <person name="Munk A.C."/>
            <person name="Brettin T."/>
            <person name="Detter J.C."/>
            <person name="Han C."/>
            <person name="Tapia R."/>
            <person name="Schmutz J."/>
            <person name="Larimer F."/>
            <person name="Land M."/>
            <person name="Hauser L."/>
            <person name="Challacombe J.F."/>
            <person name="Green L."/>
            <person name="Lindler L.E."/>
            <person name="Nikolich M.P."/>
            <person name="Richardson P."/>
        </authorList>
    </citation>
    <scope>NUCLEOTIDE SEQUENCE [LARGE SCALE GENOMIC DNA]</scope>
    <source>
        <strain>YPIII</strain>
    </source>
</reference>
<keyword id="KW-0414">Isoprene biosynthesis</keyword>
<keyword id="KW-0460">Magnesium</keyword>
<keyword id="KW-0479">Metal-binding</keyword>
<keyword id="KW-0784">Thiamine biosynthesis</keyword>
<keyword id="KW-0786">Thiamine pyrophosphate</keyword>
<keyword id="KW-0808">Transferase</keyword>
<organism>
    <name type="scientific">Yersinia pseudotuberculosis serotype O:3 (strain YPIII)</name>
    <dbReference type="NCBI Taxonomy" id="502800"/>
    <lineage>
        <taxon>Bacteria</taxon>
        <taxon>Pseudomonadati</taxon>
        <taxon>Pseudomonadota</taxon>
        <taxon>Gammaproteobacteria</taxon>
        <taxon>Enterobacterales</taxon>
        <taxon>Yersiniaceae</taxon>
        <taxon>Yersinia</taxon>
    </lineage>
</organism>
<protein>
    <recommendedName>
        <fullName evidence="1">1-deoxy-D-xylulose-5-phosphate synthase</fullName>
        <ecNumber evidence="1">2.2.1.7</ecNumber>
    </recommendedName>
    <alternativeName>
        <fullName evidence="1">1-deoxyxylulose-5-phosphate synthase</fullName>
        <shortName evidence="1">DXP synthase</shortName>
        <shortName evidence="1">DXPS</shortName>
    </alternativeName>
</protein>
<comment type="function">
    <text evidence="1">Catalyzes the acyloin condensation reaction between C atoms 2 and 3 of pyruvate and glyceraldehyde 3-phosphate to yield 1-deoxy-D-xylulose-5-phosphate (DXP).</text>
</comment>
<comment type="catalytic activity">
    <reaction evidence="1">
        <text>D-glyceraldehyde 3-phosphate + pyruvate + H(+) = 1-deoxy-D-xylulose 5-phosphate + CO2</text>
        <dbReference type="Rhea" id="RHEA:12605"/>
        <dbReference type="ChEBI" id="CHEBI:15361"/>
        <dbReference type="ChEBI" id="CHEBI:15378"/>
        <dbReference type="ChEBI" id="CHEBI:16526"/>
        <dbReference type="ChEBI" id="CHEBI:57792"/>
        <dbReference type="ChEBI" id="CHEBI:59776"/>
        <dbReference type="EC" id="2.2.1.7"/>
    </reaction>
</comment>
<comment type="cofactor">
    <cofactor evidence="1">
        <name>Mg(2+)</name>
        <dbReference type="ChEBI" id="CHEBI:18420"/>
    </cofactor>
    <text evidence="1">Binds 1 Mg(2+) ion per subunit.</text>
</comment>
<comment type="cofactor">
    <cofactor evidence="1">
        <name>thiamine diphosphate</name>
        <dbReference type="ChEBI" id="CHEBI:58937"/>
    </cofactor>
    <text evidence="1">Binds 1 thiamine pyrophosphate per subunit.</text>
</comment>
<comment type="pathway">
    <text evidence="1">Metabolic intermediate biosynthesis; 1-deoxy-D-xylulose 5-phosphate biosynthesis; 1-deoxy-D-xylulose 5-phosphate from D-glyceraldehyde 3-phosphate and pyruvate: step 1/1.</text>
</comment>
<comment type="subunit">
    <text evidence="1">Homodimer.</text>
</comment>
<comment type="similarity">
    <text evidence="1">Belongs to the transketolase family. DXPS subfamily.</text>
</comment>
<gene>
    <name evidence="1" type="primary">dxs</name>
    <name type="ordered locus">YPK_3253</name>
</gene>
<accession>B1JID8</accession>
<sequence length="619" mass="67716">MSLDIAKYPTLALAENPEELRMLPKESLPKLCDELRQYLLTCVSRSSGHFASGLGVVELTVALHYVYNTPFDHLIWDVGHQAYPHKILTGRRDRISTIRQKDGLHPFPWRGESEYDVLSVGHSSTSISAGLGMAVAAEREGKGRRTVCVIGDGAITAGMAFEAMSHAGDIHSDMLVILNDNEMSISENVGGLNNHLAQLLSGKLYASLREGGKKAFSALPPIKDLLKRTEEHLKGMVVPSTLFEELGFNYIGPVDGHDVHTLTQTLKNMRDLKGPQLLHIMTKKGKGYAPAEKDPIGWHAVPKFDPASGTLPKSQSSLPTYSKIFGEWLCETAAKDSKLMAVTPAMREGSGMVRFSREYPQQYFDVAIAEQHAVTFAAGLAIGGYKPVVAIYSTFLQRAYDQLIHDVAIQNLPVLFAIDRGGLVGADGQTHQGAFDLSFMRCIPNMVIMAPSDENECRQMLYTGYHHNGPAAVRYPRGNGTSAVLEPLEMLPIGKGVLRREGEKIAILCFGTLLAQAQLAAENLNATLVDMRFVKPLDEELVLEMAAKHQVLVTVEENAIMGGAGSGVNELLMAKRRWVPVLNIGLPDLFVPQGEQDEMRSELGLDAAGIQRQIEAWLA</sequence>